<reference key="1">
    <citation type="submission" date="2013-08" db="EMBL/GenBank/DDBJ databases">
        <title>Cloning and molecular characterization of scorpion Buthus martensi venom hyaluronidases: a novel full-length and diversiform no-code stop sequences.</title>
        <authorList>
            <person name="Xue S."/>
            <person name="Zhao Y."/>
            <person name="Ma Y."/>
            <person name="Gui G."/>
            <person name="Huang C."/>
        </authorList>
    </citation>
    <scope>NUCLEOTIDE SEQUENCE [MRNA]</scope>
</reference>
<reference key="2">
    <citation type="journal article" date="2010" name="Toxicon">
        <title>Cloning and molecular characterization of BmHYA1, a novel hyaluronidase from the venom of Chinese red scorpion Buthus martensi Karsch.</title>
        <authorList>
            <person name="Feng L."/>
            <person name="Gao R."/>
            <person name="Meng J."/>
            <person name="Gopalakrishnakone P."/>
        </authorList>
    </citation>
    <scope>NUCLEOTIDE SEQUENCE [MRNA] OF 29-410</scope>
</reference>
<reference evidence="6" key="3">
    <citation type="journal article" date="2008" name="Comp. Biochem. Physiol.">
        <title>Isolation and characterization of a hyaluronidase from the venom of Chinese red scorpion Buthus martensi.</title>
        <authorList>
            <person name="Feng L."/>
            <person name="Gao R."/>
            <person name="Gopalakrishnakone P."/>
        </authorList>
    </citation>
    <scope>PROTEIN SEQUENCE OF 26-55</scope>
    <scope>FUNCTION</scope>
    <scope>CATALYTIC ACTIVITY</scope>
    <scope>ACTIVITY REGULATION</scope>
    <scope>BIOPHYSICOCHEMICAL PROPERTIES</scope>
    <scope>SUBCELLULAR LOCATION</scope>
    <scope>TISSUE SPECIFICITY</scope>
    <source>
        <tissue evidence="4">Venom</tissue>
    </source>
</reference>
<sequence>MTQNIQMTEMYQIILFASILAAISATSADFKVVWEVPSIMCSKKFKINVTDLLTSHKILVNQEETFNGDKIVIFYESQLGKYPHIESHGDINGGMLQVSDLANHLKIARDNISKFIPDPNFNGVGIIDWEAWRPLWKYNWGRMSEYRDRSKDLVKAKHPDWSPAQIEKVAIEEWENSAKEWMLKTLKLVEDMRPNAAWCYYLFPDCYNYGGKDQPSEYFCKNDIQEANDKLSWLWKQSTALCPSIYMQESHITKYNTSQRAWWIYARLRETIRLSHPNTLIYPYINYILPGTKKTVPSMDFKRVLGQIGSLGLDGAIIWGSSYHVNTEEMCKEMKTYVKDVIAPVASTVIQNVNRCSQQICKGRGNCVWPEEPYTSWKYLIDPKNPTFKHTNISCKCKGGYTGRYCQIAP</sequence>
<protein>
    <recommendedName>
        <fullName evidence="5">Hyaluronidase-1</fullName>
        <shortName>BmHYA1</shortName>
        <shortName evidence="5">HYA1</shortName>
        <ecNumber>3.2.1.35</ecNumber>
    </recommendedName>
    <alternativeName>
        <fullName>Hyaluronoglucosaminidase-1</fullName>
    </alternativeName>
    <alternativeName>
        <fullName>Venom spreading factor</fullName>
    </alternativeName>
</protein>
<comment type="function">
    <text evidence="4">Hydrolyzes high molecular weight hyaluronic acid to produce small oligosaccharides. In venom, it may participate in the degradation of the extracellular matrix thus allowing a rapid spread of other venom components during the envenomation process.</text>
</comment>
<comment type="catalytic activity">
    <reaction evidence="4">
        <text>Random hydrolysis of (1-&gt;4)-linkages between N-acetyl-beta-D-glucosamine and D-glucuronate residues in hyaluronate.</text>
        <dbReference type="EC" id="3.2.1.35"/>
    </reaction>
</comment>
<comment type="activity regulation">
    <text evidence="4">Inhibited by heparin, and to a lesser extent by DTT, Fe(3+) and Cu(2+). Not inhibited by reduced glutathione, L-cysteine, EDTA, Ca(2+) or Mg(2+).</text>
</comment>
<comment type="biophysicochemical properties">
    <phDependence>
        <text evidence="4">Optimum pH is 4.5.</text>
    </phDependence>
    <temperatureDependence>
        <text evidence="4">Optimum temperature is 50 degrees Celsius. Activity decreases when incubated at temperatures above 24 degrees Celsius for 10 minutes. No activity remains after 10 minutes at 65 degrees Celsius.</text>
    </temperatureDependence>
</comment>
<comment type="subcellular location">
    <subcellularLocation>
        <location evidence="4">Secreted</location>
    </subcellularLocation>
</comment>
<comment type="tissue specificity">
    <text evidence="4">Expressed by the venom gland.</text>
</comment>
<comment type="similarity">
    <text evidence="4">Belongs to the glycosyl hydrolase 56 family.</text>
</comment>
<proteinExistence type="evidence at protein level"/>
<accession>P86100</accession>
<accession>D1MBU1</accession>
<accession>U6BKM8</accession>
<name>HYAL1_OLIMR</name>
<keyword id="KW-0903">Direct protein sequencing</keyword>
<keyword id="KW-1015">Disulfide bond</keyword>
<keyword id="KW-0245">EGF-like domain</keyword>
<keyword id="KW-0325">Glycoprotein</keyword>
<keyword id="KW-0326">Glycosidase</keyword>
<keyword id="KW-0378">Hydrolase</keyword>
<keyword id="KW-0964">Secreted</keyword>
<keyword id="KW-0732">Signal</keyword>
<feature type="signal peptide" evidence="4">
    <location>
        <begin position="1"/>
        <end position="25"/>
    </location>
</feature>
<feature type="chain" id="PRO_0000355081" description="Hyaluronidase-1">
    <location>
        <begin position="26"/>
        <end position="410"/>
    </location>
</feature>
<feature type="domain" description="EGF-like" evidence="3">
    <location>
        <begin position="352"/>
        <end position="407"/>
    </location>
</feature>
<feature type="active site" description="Proton donor" evidence="1">
    <location>
        <position position="130"/>
    </location>
</feature>
<feature type="glycosylation site" description="N-linked (GlcNAc...) asparagine" evidence="2">
    <location>
        <position position="48"/>
    </location>
</feature>
<feature type="glycosylation site" description="N-linked (GlcNAc...) asparagine" evidence="2">
    <location>
        <position position="111"/>
    </location>
</feature>
<feature type="glycosylation site" description="N-linked (GlcNAc...) asparagine" evidence="2">
    <location>
        <position position="256"/>
    </location>
</feature>
<feature type="glycosylation site" description="N-linked (GlcNAc...) asparagine" evidence="2">
    <location>
        <position position="392"/>
    </location>
</feature>
<feature type="disulfide bond" evidence="3">
    <location>
        <begin position="41"/>
        <end position="331"/>
    </location>
</feature>
<feature type="disulfide bond" evidence="3">
    <location>
        <begin position="199"/>
        <end position="242"/>
    </location>
</feature>
<feature type="disulfide bond" evidence="3">
    <location>
        <begin position="206"/>
        <end position="220"/>
    </location>
</feature>
<feature type="disulfide bond" evidence="3">
    <location>
        <begin position="356"/>
        <end position="367"/>
    </location>
</feature>
<feature type="disulfide bond" evidence="3">
    <location>
        <begin position="361"/>
        <end position="395"/>
    </location>
</feature>
<feature type="disulfide bond" evidence="3">
    <location>
        <begin position="397"/>
        <end position="406"/>
    </location>
</feature>
<feature type="sequence conflict" description="In Ref. 3; AA sequence." evidence="6" ref="3">
    <original>N</original>
    <variation>C</variation>
    <location>
        <position position="48"/>
    </location>
</feature>
<feature type="sequence conflict" description="In Ref. 2; no nucleotide entry." evidence="6" ref="2">
    <original>A</original>
    <variation>T</variation>
    <location>
        <position position="102"/>
    </location>
</feature>
<feature type="sequence conflict" description="In Ref. 2; no nucleotide entry." evidence="6" ref="2">
    <original>W</original>
    <variation>G</variation>
    <location>
        <position position="132"/>
    </location>
</feature>
<feature type="sequence conflict" description="In Ref. 2; no nucleotide entry." evidence="6" ref="2">
    <original>L</original>
    <variation>F</variation>
    <location>
        <position position="135"/>
    </location>
</feature>
<feature type="sequence conflict" description="In Ref. 2; ACY69673." evidence="6" ref="2">
    <original>V</original>
    <variation>A</variation>
    <location>
        <position position="189"/>
    </location>
</feature>
<feature type="sequence conflict" description="In Ref. 2; no nucleotide entry." evidence="6" ref="2">
    <original>W</original>
    <variation>G</variation>
    <location>
        <position position="235"/>
    </location>
</feature>
<feature type="sequence conflict" description="In Ref. 2; ACY69673." evidence="6" ref="2">
    <original>E</original>
    <variation>G</variation>
    <location>
        <position position="329"/>
    </location>
</feature>
<organism>
    <name type="scientific">Olivierus martensii</name>
    <name type="common">Manchurian scorpion</name>
    <name type="synonym">Mesobuthus martensii</name>
    <dbReference type="NCBI Taxonomy" id="34649"/>
    <lineage>
        <taxon>Eukaryota</taxon>
        <taxon>Metazoa</taxon>
        <taxon>Ecdysozoa</taxon>
        <taxon>Arthropoda</taxon>
        <taxon>Chelicerata</taxon>
        <taxon>Arachnida</taxon>
        <taxon>Scorpiones</taxon>
        <taxon>Buthida</taxon>
        <taxon>Buthoidea</taxon>
        <taxon>Buthidae</taxon>
        <taxon>Olivierus</taxon>
    </lineage>
</organism>
<evidence type="ECO:0000250" key="1"/>
<evidence type="ECO:0000255" key="2"/>
<evidence type="ECO:0000255" key="3">
    <source>
        <dbReference type="PROSITE-ProRule" id="PRU00076"/>
    </source>
</evidence>
<evidence type="ECO:0000269" key="4">
    <source>
    </source>
</evidence>
<evidence type="ECO:0000303" key="5">
    <source>
    </source>
</evidence>
<evidence type="ECO:0000305" key="6"/>
<dbReference type="EC" id="3.2.1.35"/>
<dbReference type="EMBL" id="KF588514">
    <property type="protein sequence ID" value="AHA36327.1"/>
    <property type="molecule type" value="mRNA"/>
</dbReference>
<dbReference type="EMBL" id="GU130249">
    <property type="protein sequence ID" value="ACY69673.1"/>
    <property type="molecule type" value="mRNA"/>
</dbReference>
<dbReference type="SMR" id="P86100"/>
<dbReference type="CAZy" id="GH56">
    <property type="family name" value="Glycoside Hydrolase Family 56"/>
</dbReference>
<dbReference type="BRENDA" id="3.2.1.35">
    <property type="organism ID" value="11141"/>
</dbReference>
<dbReference type="GO" id="GO:0005576">
    <property type="term" value="C:extracellular region"/>
    <property type="evidence" value="ECO:0000314"/>
    <property type="project" value="UniProtKB"/>
</dbReference>
<dbReference type="GO" id="GO:0033906">
    <property type="term" value="F:hyaluronoglucuronidase activity"/>
    <property type="evidence" value="ECO:0000314"/>
    <property type="project" value="UniProtKB"/>
</dbReference>
<dbReference type="GO" id="GO:0004415">
    <property type="term" value="F:hyalurononglucosaminidase activity"/>
    <property type="evidence" value="ECO:0007669"/>
    <property type="project" value="UniProtKB-EC"/>
</dbReference>
<dbReference type="GO" id="GO:0090729">
    <property type="term" value="F:toxin activity"/>
    <property type="evidence" value="ECO:0000314"/>
    <property type="project" value="UniProtKB"/>
</dbReference>
<dbReference type="GO" id="GO:0005975">
    <property type="term" value="P:carbohydrate metabolic process"/>
    <property type="evidence" value="ECO:0007669"/>
    <property type="project" value="InterPro"/>
</dbReference>
<dbReference type="GO" id="GO:0030214">
    <property type="term" value="P:hyaluronan catabolic process"/>
    <property type="evidence" value="ECO:0007669"/>
    <property type="project" value="TreeGrafter"/>
</dbReference>
<dbReference type="GO" id="GO:0035821">
    <property type="term" value="P:modulation of process of another organism"/>
    <property type="evidence" value="ECO:0000314"/>
    <property type="project" value="UniProtKB"/>
</dbReference>
<dbReference type="FunFam" id="3.20.20.70:FF:000065">
    <property type="entry name" value="Hyaluronidase"/>
    <property type="match status" value="1"/>
</dbReference>
<dbReference type="Gene3D" id="3.20.20.70">
    <property type="entry name" value="Aldolase class I"/>
    <property type="match status" value="1"/>
</dbReference>
<dbReference type="InterPro" id="IPR013785">
    <property type="entry name" value="Aldolase_TIM"/>
</dbReference>
<dbReference type="InterPro" id="IPR000742">
    <property type="entry name" value="EGF-like_dom"/>
</dbReference>
<dbReference type="InterPro" id="IPR017853">
    <property type="entry name" value="Glycoside_hydrolase_SF"/>
</dbReference>
<dbReference type="InterPro" id="IPR018155">
    <property type="entry name" value="Hyaluronidase"/>
</dbReference>
<dbReference type="PANTHER" id="PTHR11769">
    <property type="entry name" value="HYALURONIDASE"/>
    <property type="match status" value="1"/>
</dbReference>
<dbReference type="PANTHER" id="PTHR11769:SF35">
    <property type="entry name" value="HYALURONIDASE"/>
    <property type="match status" value="1"/>
</dbReference>
<dbReference type="Pfam" id="PF01630">
    <property type="entry name" value="Glyco_hydro_56"/>
    <property type="match status" value="1"/>
</dbReference>
<dbReference type="PIRSF" id="PIRSF038193">
    <property type="entry name" value="Hyaluronidase"/>
    <property type="match status" value="1"/>
</dbReference>
<dbReference type="PRINTS" id="PR00846">
    <property type="entry name" value="GLHYDRLASE56"/>
</dbReference>
<dbReference type="SUPFAM" id="SSF51445">
    <property type="entry name" value="(Trans)glycosidases"/>
    <property type="match status" value="1"/>
</dbReference>
<dbReference type="PROSITE" id="PS00022">
    <property type="entry name" value="EGF_1"/>
    <property type="match status" value="1"/>
</dbReference>
<dbReference type="PROSITE" id="PS01186">
    <property type="entry name" value="EGF_2"/>
    <property type="match status" value="1"/>
</dbReference>
<dbReference type="PROSITE" id="PS50026">
    <property type="entry name" value="EGF_3"/>
    <property type="match status" value="1"/>
</dbReference>